<reference key="1">
    <citation type="submission" date="2003-11" db="EMBL/GenBank/DDBJ databases">
        <authorList>
            <consortium name="NIH - Xenopus Gene Collection (XGC) project"/>
        </authorList>
    </citation>
    <scope>NUCLEOTIDE SEQUENCE [LARGE SCALE MRNA]</scope>
    <source>
        <tissue>Embryo</tissue>
    </source>
</reference>
<organism>
    <name type="scientific">Xenopus tropicalis</name>
    <name type="common">Western clawed frog</name>
    <name type="synonym">Silurana tropicalis</name>
    <dbReference type="NCBI Taxonomy" id="8364"/>
    <lineage>
        <taxon>Eukaryota</taxon>
        <taxon>Metazoa</taxon>
        <taxon>Chordata</taxon>
        <taxon>Craniata</taxon>
        <taxon>Vertebrata</taxon>
        <taxon>Euteleostomi</taxon>
        <taxon>Amphibia</taxon>
        <taxon>Batrachia</taxon>
        <taxon>Anura</taxon>
        <taxon>Pipoidea</taxon>
        <taxon>Pipidae</taxon>
        <taxon>Xenopodinae</taxon>
        <taxon>Xenopus</taxon>
        <taxon>Silurana</taxon>
    </lineage>
</organism>
<proteinExistence type="evidence at transcript level"/>
<dbReference type="EMBL" id="BC061301">
    <property type="protein sequence ID" value="AAH61301.1"/>
    <property type="molecule type" value="mRNA"/>
</dbReference>
<dbReference type="RefSeq" id="NP_988990.1">
    <property type="nucleotide sequence ID" value="NM_203659.1"/>
</dbReference>
<dbReference type="SMR" id="Q6P8C8"/>
<dbReference type="FunCoup" id="Q6P8C8">
    <property type="interactions" value="1152"/>
</dbReference>
<dbReference type="STRING" id="8364.ENSXETP00000031096"/>
<dbReference type="PaxDb" id="8364-ENSXETP00000001981"/>
<dbReference type="DNASU" id="394587"/>
<dbReference type="GeneID" id="394587"/>
<dbReference type="KEGG" id="xtr:394587"/>
<dbReference type="AGR" id="Xenbase:XB-GENE-866659"/>
<dbReference type="CTD" id="127829"/>
<dbReference type="Xenbase" id="XB-GENE-866659">
    <property type="gene designation" value="arl8a"/>
</dbReference>
<dbReference type="eggNOG" id="KOG0075">
    <property type="taxonomic scope" value="Eukaryota"/>
</dbReference>
<dbReference type="HOGENOM" id="CLU_040729_10_0_1"/>
<dbReference type="InParanoid" id="Q6P8C8"/>
<dbReference type="OMA" id="RFRSEWG"/>
<dbReference type="OrthoDB" id="2011769at2759"/>
<dbReference type="PhylomeDB" id="Q6P8C8"/>
<dbReference type="Reactome" id="R-XTR-6798695">
    <property type="pathway name" value="Neutrophil degranulation"/>
</dbReference>
<dbReference type="Proteomes" id="UP000008143">
    <property type="component" value="Chromosome 2"/>
</dbReference>
<dbReference type="Bgee" id="ENSXETG00000000910">
    <property type="expression patterns" value="Expressed in brain and 7 other cell types or tissues"/>
</dbReference>
<dbReference type="ExpressionAtlas" id="Q6P8C8">
    <property type="expression patterns" value="differential"/>
</dbReference>
<dbReference type="GO" id="GO:0031902">
    <property type="term" value="C:late endosome membrane"/>
    <property type="evidence" value="ECO:0007669"/>
    <property type="project" value="UniProtKB-SubCell"/>
</dbReference>
<dbReference type="GO" id="GO:0005765">
    <property type="term" value="C:lysosomal membrane"/>
    <property type="evidence" value="ECO:0007669"/>
    <property type="project" value="UniProtKB-SubCell"/>
</dbReference>
<dbReference type="GO" id="GO:0005525">
    <property type="term" value="F:GTP binding"/>
    <property type="evidence" value="ECO:0007669"/>
    <property type="project" value="UniProtKB-KW"/>
</dbReference>
<dbReference type="GO" id="GO:0003924">
    <property type="term" value="F:GTPase activity"/>
    <property type="evidence" value="ECO:0007669"/>
    <property type="project" value="InterPro"/>
</dbReference>
<dbReference type="GO" id="GO:0051301">
    <property type="term" value="P:cell division"/>
    <property type="evidence" value="ECO:0007669"/>
    <property type="project" value="UniProtKB-KW"/>
</dbReference>
<dbReference type="GO" id="GO:0007059">
    <property type="term" value="P:chromosome segregation"/>
    <property type="evidence" value="ECO:0007669"/>
    <property type="project" value="UniProtKB-KW"/>
</dbReference>
<dbReference type="GO" id="GO:0015031">
    <property type="term" value="P:protein transport"/>
    <property type="evidence" value="ECO:0007669"/>
    <property type="project" value="InterPro"/>
</dbReference>
<dbReference type="CDD" id="cd04159">
    <property type="entry name" value="Arl10_like"/>
    <property type="match status" value="1"/>
</dbReference>
<dbReference type="FunFam" id="3.40.50.300:FF:000247">
    <property type="entry name" value="ADP-ribosylation factor-like GTPase 8A"/>
    <property type="match status" value="1"/>
</dbReference>
<dbReference type="Gene3D" id="3.40.50.300">
    <property type="entry name" value="P-loop containing nucleotide triphosphate hydrolases"/>
    <property type="match status" value="1"/>
</dbReference>
<dbReference type="InterPro" id="IPR044154">
    <property type="entry name" value="Arl8a/8b"/>
</dbReference>
<dbReference type="InterPro" id="IPR027417">
    <property type="entry name" value="P-loop_NTPase"/>
</dbReference>
<dbReference type="InterPro" id="IPR005225">
    <property type="entry name" value="Small_GTP-bd"/>
</dbReference>
<dbReference type="InterPro" id="IPR006689">
    <property type="entry name" value="Small_GTPase_ARF/SAR"/>
</dbReference>
<dbReference type="NCBIfam" id="TIGR00231">
    <property type="entry name" value="small_GTP"/>
    <property type="match status" value="1"/>
</dbReference>
<dbReference type="PANTHER" id="PTHR45732">
    <property type="entry name" value="ADP-RIBOSYLATION FACTOR-LIKE PROTEIN 8"/>
    <property type="match status" value="1"/>
</dbReference>
<dbReference type="PANTHER" id="PTHR45732:SF4">
    <property type="entry name" value="ADP-RIBOSYLATION FACTOR-LIKE PROTEIN 8A"/>
    <property type="match status" value="1"/>
</dbReference>
<dbReference type="Pfam" id="PF00025">
    <property type="entry name" value="Arf"/>
    <property type="match status" value="1"/>
</dbReference>
<dbReference type="PRINTS" id="PR00328">
    <property type="entry name" value="SAR1GTPBP"/>
</dbReference>
<dbReference type="SMART" id="SM00177">
    <property type="entry name" value="ARF"/>
    <property type="match status" value="1"/>
</dbReference>
<dbReference type="SMART" id="SM00175">
    <property type="entry name" value="RAB"/>
    <property type="match status" value="1"/>
</dbReference>
<dbReference type="SMART" id="SM00178">
    <property type="entry name" value="SAR"/>
    <property type="match status" value="1"/>
</dbReference>
<dbReference type="SUPFAM" id="SSF52540">
    <property type="entry name" value="P-loop containing nucleoside triphosphate hydrolases"/>
    <property type="match status" value="1"/>
</dbReference>
<dbReference type="PROSITE" id="PS51417">
    <property type="entry name" value="ARF"/>
    <property type="match status" value="1"/>
</dbReference>
<keyword id="KW-0131">Cell cycle</keyword>
<keyword id="KW-0132">Cell division</keyword>
<keyword id="KW-0159">Chromosome partition</keyword>
<keyword id="KW-0967">Endosome</keyword>
<keyword id="KW-0342">GTP-binding</keyword>
<keyword id="KW-0458">Lysosome</keyword>
<keyword id="KW-0472">Membrane</keyword>
<keyword id="KW-0498">Mitosis</keyword>
<keyword id="KW-0547">Nucleotide-binding</keyword>
<keyword id="KW-1185">Reference proteome</keyword>
<evidence type="ECO:0000250" key="1"/>
<evidence type="ECO:0000305" key="2"/>
<sequence>MLALFNKLLDWFKALFWKEEMELTLVGLQYSGKTTFVNVIASGQFNEDMIPTVGFNMRKITKGNVTIKLWDIGGQPRFRSMWERYCRGVSAIVYMVDAADQDKIEASKNELHNLLDKAQLQGIPVLVLGNKRDIPGALDEKELIERMNLSAIQDREICCYSISCKEKDNIDITLQWLIQHSKSRRS</sequence>
<name>ARL8A_XENTR</name>
<protein>
    <recommendedName>
        <fullName>ADP-ribosylation factor-like protein 8A</fullName>
    </recommendedName>
    <alternativeName>
        <fullName>ADP-ribosylation factor-like protein 10B</fullName>
    </alternativeName>
</protein>
<comment type="function">
    <text evidence="1">May play a role in lysosomes motility. Alternatively, may play a role in chromosome segregation (By similarity).</text>
</comment>
<comment type="subcellular location">
    <subcellularLocation>
        <location evidence="1">Late endosome membrane</location>
    </subcellularLocation>
    <subcellularLocation>
        <location evidence="1">Lysosome membrane</location>
    </subcellularLocation>
</comment>
<comment type="similarity">
    <text evidence="2">Belongs to the small GTPase superfamily. Arf family.</text>
</comment>
<accession>Q6P8C8</accession>
<gene>
    <name type="primary">arl8a</name>
    <name type="synonym">arl10b</name>
</gene>
<feature type="chain" id="PRO_0000232919" description="ADP-ribosylation factor-like protein 8A">
    <location>
        <begin position="1"/>
        <end position="186"/>
    </location>
</feature>
<feature type="intramembrane region" description="Note=Mediates targeting to membranes" evidence="1">
    <location>
        <begin position="1"/>
        <end position="19"/>
    </location>
</feature>
<feature type="binding site" evidence="1">
    <location>
        <begin position="29"/>
        <end position="35"/>
    </location>
    <ligand>
        <name>GTP</name>
        <dbReference type="ChEBI" id="CHEBI:37565"/>
    </ligand>
</feature>
<feature type="binding site" evidence="1">
    <location>
        <begin position="71"/>
        <end position="75"/>
    </location>
    <ligand>
        <name>GTP</name>
        <dbReference type="ChEBI" id="CHEBI:37565"/>
    </ligand>
</feature>
<feature type="binding site" evidence="1">
    <location>
        <begin position="130"/>
        <end position="133"/>
    </location>
    <ligand>
        <name>GTP</name>
        <dbReference type="ChEBI" id="CHEBI:37565"/>
    </ligand>
</feature>